<organism>
    <name type="scientific">Xenopus laevis</name>
    <name type="common">African clawed frog</name>
    <dbReference type="NCBI Taxonomy" id="8355"/>
    <lineage>
        <taxon>Eukaryota</taxon>
        <taxon>Metazoa</taxon>
        <taxon>Chordata</taxon>
        <taxon>Craniata</taxon>
        <taxon>Vertebrata</taxon>
        <taxon>Euteleostomi</taxon>
        <taxon>Amphibia</taxon>
        <taxon>Batrachia</taxon>
        <taxon>Anura</taxon>
        <taxon>Pipoidea</taxon>
        <taxon>Pipidae</taxon>
        <taxon>Xenopodinae</taxon>
        <taxon>Xenopus</taxon>
        <taxon>Xenopus</taxon>
    </lineage>
</organism>
<accession>P21711</accession>
<sequence length="377" mass="42250">MDGFSQQLEDLYPSCFSPCPSPLGFSEPVIQPFAMNLAPAAQKDFQQHPNRREVTKIPGAGEQSPVQNVRPKDAINPKEADPRSPTADASLVPASQRRKRTFFTQAQLDILEQFFQTNMYPDIHHREELARHIYIPESRIQVWFQNRRAKVRRQGAKATKPILAGHHYSGTSGANRAMFPSAPAPNSSSHQMTTSRAQVQPLKESQMNMFHQNQGFLPYPDSSCNVSRQRFLMSQPTPGAYHLPQASSNVYNQNVKSQNPLWNQQTTNRVYTNMMETVLDLSRRPSQQMPVQPMLMNSFQTNKNIKPEVYTTSPQIPVSTTSSQVSLFANQEPCHMSTTQGGTYGQISPISDSGVSDTSPEPSSDWEENVASVLLNL</sequence>
<reference key="1">
    <citation type="journal article" date="1989" name="Cell">
        <title>Mix.1, a homeobox mRNA inducible by mesoderm inducers, is expressed mostly in the presumptive endodermal cells of Xenopus embryos.</title>
        <authorList>
            <person name="Rosa F.M."/>
        </authorList>
    </citation>
    <scope>NUCLEOTIDE SEQUENCE [MRNA]</scope>
    <scope>FUNCTION</scope>
    <scope>TISSUE SPECIFICITY</scope>
    <scope>INDUCTION</scope>
    <source>
        <tissue>Gastrula</tissue>
    </source>
</reference>
<reference key="2">
    <citation type="journal article" date="2003" name="Dev. Biol.">
        <title>Molecular link in the sequential induction of the Spemann organizer: direct activation of the cerberus gene by Xlim-1, Xotx2, Mix.1, and Siamois, immediately downstream from Nodal and Wnt signaling.</title>
        <authorList>
            <person name="Yamamoto S."/>
            <person name="Hikasa H."/>
            <person name="Ono H."/>
            <person name="Taira M."/>
        </authorList>
    </citation>
    <scope>FUNCTION</scope>
</reference>
<protein>
    <recommendedName>
        <fullName>Homeobox protein Mix.1</fullName>
    </recommendedName>
</protein>
<dbReference type="EMBL" id="M27063">
    <property type="protein sequence ID" value="AAA49903.1"/>
    <property type="molecule type" value="mRNA"/>
</dbReference>
<dbReference type="PIR" id="A32548">
    <property type="entry name" value="A32548"/>
</dbReference>
<dbReference type="RefSeq" id="NP_001081294.1">
    <property type="nucleotide sequence ID" value="NM_001087825.1"/>
</dbReference>
<dbReference type="SMR" id="P21711"/>
<dbReference type="IntAct" id="P21711">
    <property type="interactions" value="1"/>
</dbReference>
<dbReference type="GeneID" id="397759"/>
<dbReference type="KEGG" id="xla:397759"/>
<dbReference type="AGR" id="Xenbase:XB-GENE-865559"/>
<dbReference type="CTD" id="397759"/>
<dbReference type="Xenbase" id="XB-GENE-865559">
    <property type="gene designation" value="mix1.S"/>
</dbReference>
<dbReference type="OMA" id="WEENVAS"/>
<dbReference type="OrthoDB" id="6159439at2759"/>
<dbReference type="Proteomes" id="UP000186698">
    <property type="component" value="Chromosome 5S"/>
</dbReference>
<dbReference type="Bgee" id="397759">
    <property type="expression patterns" value="Expressed in gastrula and 1 other cell type or tissue"/>
</dbReference>
<dbReference type="GO" id="GO:0005634">
    <property type="term" value="C:nucleus"/>
    <property type="evidence" value="ECO:0000318"/>
    <property type="project" value="GO_Central"/>
</dbReference>
<dbReference type="GO" id="GO:0000981">
    <property type="term" value="F:DNA-binding transcription factor activity, RNA polymerase II-specific"/>
    <property type="evidence" value="ECO:0000318"/>
    <property type="project" value="GO_Central"/>
</dbReference>
<dbReference type="GO" id="GO:0000978">
    <property type="term" value="F:RNA polymerase II cis-regulatory region sequence-specific DNA binding"/>
    <property type="evidence" value="ECO:0000318"/>
    <property type="project" value="GO_Central"/>
</dbReference>
<dbReference type="GO" id="GO:0061629">
    <property type="term" value="F:RNA polymerase II-specific DNA-binding transcription factor binding"/>
    <property type="evidence" value="ECO:0000353"/>
    <property type="project" value="BHF-UCL"/>
</dbReference>
<dbReference type="GO" id="GO:0043565">
    <property type="term" value="F:sequence-specific DNA binding"/>
    <property type="evidence" value="ECO:0000314"/>
    <property type="project" value="UniProtKB"/>
</dbReference>
<dbReference type="GO" id="GO:0045893">
    <property type="term" value="P:positive regulation of DNA-templated transcription"/>
    <property type="evidence" value="ECO:0000314"/>
    <property type="project" value="UniProtKB"/>
</dbReference>
<dbReference type="GO" id="GO:0006357">
    <property type="term" value="P:regulation of transcription by RNA polymerase II"/>
    <property type="evidence" value="ECO:0000318"/>
    <property type="project" value="GO_Central"/>
</dbReference>
<dbReference type="CDD" id="cd00086">
    <property type="entry name" value="homeodomain"/>
    <property type="match status" value="1"/>
</dbReference>
<dbReference type="FunFam" id="1.10.10.60:FF:000312">
    <property type="entry name" value="Mix-type homeobox gene 1"/>
    <property type="match status" value="1"/>
</dbReference>
<dbReference type="Gene3D" id="1.10.10.60">
    <property type="entry name" value="Homeodomain-like"/>
    <property type="match status" value="1"/>
</dbReference>
<dbReference type="InterPro" id="IPR001356">
    <property type="entry name" value="HD"/>
</dbReference>
<dbReference type="InterPro" id="IPR017970">
    <property type="entry name" value="Homeobox_CS"/>
</dbReference>
<dbReference type="InterPro" id="IPR051306">
    <property type="entry name" value="Homeobox_regulator"/>
</dbReference>
<dbReference type="InterPro" id="IPR009057">
    <property type="entry name" value="Homeodomain-like_sf"/>
</dbReference>
<dbReference type="PANTHER" id="PTHR46123:SF10">
    <property type="entry name" value="HOMEOBOX PROTEIN MIX.2"/>
    <property type="match status" value="1"/>
</dbReference>
<dbReference type="PANTHER" id="PTHR46123">
    <property type="entry name" value="MIX-TYPE HOMEOBOX GENE 1-RELATED"/>
    <property type="match status" value="1"/>
</dbReference>
<dbReference type="Pfam" id="PF00046">
    <property type="entry name" value="Homeodomain"/>
    <property type="match status" value="1"/>
</dbReference>
<dbReference type="SMART" id="SM00389">
    <property type="entry name" value="HOX"/>
    <property type="match status" value="1"/>
</dbReference>
<dbReference type="SUPFAM" id="SSF46689">
    <property type="entry name" value="Homeodomain-like"/>
    <property type="match status" value="1"/>
</dbReference>
<dbReference type="PROSITE" id="PS00027">
    <property type="entry name" value="HOMEOBOX_1"/>
    <property type="match status" value="1"/>
</dbReference>
<dbReference type="PROSITE" id="PS50071">
    <property type="entry name" value="HOMEOBOX_2"/>
    <property type="match status" value="1"/>
</dbReference>
<proteinExistence type="evidence at transcript level"/>
<gene>
    <name type="primary">mix-a</name>
    <name type="synonym">mix1</name>
</gene>
<evidence type="ECO:0000255" key="1">
    <source>
        <dbReference type="PROSITE-ProRule" id="PRU00108"/>
    </source>
</evidence>
<evidence type="ECO:0000256" key="2">
    <source>
        <dbReference type="SAM" id="MobiDB-lite"/>
    </source>
</evidence>
<evidence type="ECO:0000269" key="3">
    <source>
    </source>
</evidence>
<evidence type="ECO:0000269" key="4">
    <source>
    </source>
</evidence>
<evidence type="ECO:0000305" key="5"/>
<feature type="chain" id="PRO_0000049193" description="Homeobox protein Mix.1">
    <location>
        <begin position="1"/>
        <end position="377"/>
    </location>
</feature>
<feature type="DNA-binding region" description="Homeobox" evidence="1">
    <location>
        <begin position="96"/>
        <end position="155"/>
    </location>
</feature>
<feature type="region of interest" description="Disordered" evidence="2">
    <location>
        <begin position="41"/>
        <end position="93"/>
    </location>
</feature>
<feature type="region of interest" description="Disordered" evidence="2">
    <location>
        <begin position="334"/>
        <end position="369"/>
    </location>
</feature>
<feature type="compositionally biased region" description="Basic and acidic residues" evidence="2">
    <location>
        <begin position="70"/>
        <end position="82"/>
    </location>
</feature>
<feature type="compositionally biased region" description="Polar residues" evidence="2">
    <location>
        <begin position="336"/>
        <end position="362"/>
    </location>
</feature>
<keyword id="KW-0217">Developmental protein</keyword>
<keyword id="KW-0238">DNA-binding</keyword>
<keyword id="KW-0371">Homeobox</keyword>
<keyword id="KW-0539">Nucleus</keyword>
<keyword id="KW-1185">Reference proteome</keyword>
<name>MIX1_XENLA</name>
<comment type="function">
    <text evidence="3 4">Transcription factor which plays a regulatory role in the development of the embryo. Involved in the establishment of dorsal/ventral pattern in the early mesoderm. Activates the head organizer gene cer1 by acting synergistically with otx2 and siamois through the 5'-TAATCT-3' element of the cer1 promoter. Also binds as a complex with lhx1/lim1 and siamois to the 3x 5'-TAAT-3' element of the cer1 promoter.</text>
</comment>
<comment type="subcellular location">
    <subcellularLocation>
        <location>Nucleus</location>
    </subcellularLocation>
</comment>
<comment type="tissue specificity">
    <text evidence="4">Expressed mostly in the presumptive endodermal cells of Xenopus embryos.</text>
</comment>
<comment type="induction">
    <text evidence="4">By activin and TGF-beta1 (immediate early response gene).</text>
</comment>
<comment type="similarity">
    <text evidence="5">Belongs to the paired homeobox family.</text>
</comment>